<dbReference type="EMBL" id="DQ897681">
    <property type="protein sequence ID" value="ABI17256.1"/>
    <property type="molecule type" value="Genomic_DNA"/>
</dbReference>
<dbReference type="RefSeq" id="YP_784065.1">
    <property type="nucleotide sequence ID" value="NC_008454.1"/>
</dbReference>
<dbReference type="SMR" id="Q06FW6"/>
<dbReference type="GeneID" id="4362804"/>
<dbReference type="GO" id="GO:0009535">
    <property type="term" value="C:chloroplast thylakoid membrane"/>
    <property type="evidence" value="ECO:0007669"/>
    <property type="project" value="UniProtKB-SubCell"/>
</dbReference>
<dbReference type="GO" id="GO:0015979">
    <property type="term" value="P:photosynthesis"/>
    <property type="evidence" value="ECO:0007669"/>
    <property type="project" value="UniProtKB-UniRule"/>
</dbReference>
<dbReference type="FunFam" id="1.25.40.10:FF:000004">
    <property type="entry name" value="Photosystem I assembly protein Ycf3"/>
    <property type="match status" value="1"/>
</dbReference>
<dbReference type="Gene3D" id="1.25.40.10">
    <property type="entry name" value="Tetratricopeptide repeat domain"/>
    <property type="match status" value="1"/>
</dbReference>
<dbReference type="HAMAP" id="MF_00439">
    <property type="entry name" value="Ycf3"/>
    <property type="match status" value="1"/>
</dbReference>
<dbReference type="InterPro" id="IPR022818">
    <property type="entry name" value="PSI_Ycf3_assembly"/>
</dbReference>
<dbReference type="InterPro" id="IPR011990">
    <property type="entry name" value="TPR-like_helical_dom_sf"/>
</dbReference>
<dbReference type="InterPro" id="IPR019734">
    <property type="entry name" value="TPR_rpt"/>
</dbReference>
<dbReference type="InterPro" id="IPR051685">
    <property type="entry name" value="Ycf3/AcsC/BcsC/TPR_MFPF"/>
</dbReference>
<dbReference type="NCBIfam" id="NF002725">
    <property type="entry name" value="PRK02603.1"/>
    <property type="match status" value="1"/>
</dbReference>
<dbReference type="PANTHER" id="PTHR44943">
    <property type="entry name" value="CELLULOSE SYNTHASE OPERON PROTEIN C"/>
    <property type="match status" value="1"/>
</dbReference>
<dbReference type="PANTHER" id="PTHR44943:SF8">
    <property type="entry name" value="TPR REPEAT-CONTAINING PROTEIN MJ0263"/>
    <property type="match status" value="1"/>
</dbReference>
<dbReference type="Pfam" id="PF00515">
    <property type="entry name" value="TPR_1"/>
    <property type="match status" value="1"/>
</dbReference>
<dbReference type="SMART" id="SM00028">
    <property type="entry name" value="TPR"/>
    <property type="match status" value="3"/>
</dbReference>
<dbReference type="SUPFAM" id="SSF48452">
    <property type="entry name" value="TPR-like"/>
    <property type="match status" value="1"/>
</dbReference>
<dbReference type="PROSITE" id="PS50005">
    <property type="entry name" value="TPR"/>
    <property type="match status" value="3"/>
</dbReference>
<dbReference type="PROSITE" id="PS50293">
    <property type="entry name" value="TPR_REGION"/>
    <property type="match status" value="2"/>
</dbReference>
<name>YCF3_PELHO</name>
<protein>
    <recommendedName>
        <fullName evidence="1">Photosystem I assembly protein Ycf3</fullName>
    </recommendedName>
</protein>
<gene>
    <name evidence="1" type="primary">ycf3</name>
</gene>
<sequence length="168" mass="19598">MPRSRINGNFIDKTFSIVANILLRIIPTTSGEREAFTYYRDGMSAQSEGNYAEALQNYYEAMRLEMDPYDRSYILYNIGLIHTSNGEHTKALEYYFRALERNPFLPQALNNMAVICHYRGEQAIRQGDSEIAEAWFDQAAEYWKQAIALTPGNYIEAQNWLKITRRFE</sequence>
<proteinExistence type="inferred from homology"/>
<accession>Q06FW6</accession>
<comment type="function">
    <text evidence="1">Essential for the assembly of the photosystem I (PSI) complex. May act as a chaperone-like factor to guide the assembly of the PSI subunits.</text>
</comment>
<comment type="subcellular location">
    <subcellularLocation>
        <location evidence="1">Plastid</location>
        <location evidence="1">Chloroplast thylakoid membrane</location>
        <topology evidence="1">Peripheral membrane protein</topology>
    </subcellularLocation>
</comment>
<comment type="similarity">
    <text evidence="1">Belongs to the Ycf3 family.</text>
</comment>
<feature type="chain" id="PRO_0000275630" description="Photosystem I assembly protein Ycf3">
    <location>
        <begin position="1"/>
        <end position="168"/>
    </location>
</feature>
<feature type="repeat" description="TPR 1">
    <location>
        <begin position="35"/>
        <end position="68"/>
    </location>
</feature>
<feature type="repeat" description="TPR 2">
    <location>
        <begin position="72"/>
        <end position="105"/>
    </location>
</feature>
<feature type="repeat" description="TPR 3">
    <location>
        <begin position="120"/>
        <end position="153"/>
    </location>
</feature>
<evidence type="ECO:0000255" key="1">
    <source>
        <dbReference type="HAMAP-Rule" id="MF_00439"/>
    </source>
</evidence>
<keyword id="KW-0150">Chloroplast</keyword>
<keyword id="KW-0472">Membrane</keyword>
<keyword id="KW-0602">Photosynthesis</keyword>
<keyword id="KW-0934">Plastid</keyword>
<keyword id="KW-0677">Repeat</keyword>
<keyword id="KW-0793">Thylakoid</keyword>
<keyword id="KW-0802">TPR repeat</keyword>
<reference key="1">
    <citation type="journal article" date="2006" name="Mol. Biol. Evol.">
        <title>The complete chloroplast genome sequence of Pelargonium x hortorum: organization and evolution of the largest and most highly rearranged chloroplast genome of land plants.</title>
        <authorList>
            <person name="Chumley T.W."/>
            <person name="Palmer J.D."/>
            <person name="Mower J.P."/>
            <person name="Fourcade H.M."/>
            <person name="Calie P.J."/>
            <person name="Boore J.L."/>
            <person name="Jansen R.K."/>
        </authorList>
    </citation>
    <scope>NUCLEOTIDE SEQUENCE [LARGE SCALE GENOMIC DNA]</scope>
    <source>
        <strain>cv. Ringo White</strain>
    </source>
</reference>
<geneLocation type="chloroplast"/>
<organism>
    <name type="scientific">Pelargonium hortorum</name>
    <name type="common">Common geranium</name>
    <name type="synonym">Pelargonium inquinans x Pelargonium zonale</name>
    <dbReference type="NCBI Taxonomy" id="4031"/>
    <lineage>
        <taxon>Eukaryota</taxon>
        <taxon>Viridiplantae</taxon>
        <taxon>Streptophyta</taxon>
        <taxon>Embryophyta</taxon>
        <taxon>Tracheophyta</taxon>
        <taxon>Spermatophyta</taxon>
        <taxon>Magnoliopsida</taxon>
        <taxon>eudicotyledons</taxon>
        <taxon>Gunneridae</taxon>
        <taxon>Pentapetalae</taxon>
        <taxon>rosids</taxon>
        <taxon>malvids</taxon>
        <taxon>Geraniales</taxon>
        <taxon>Geraniaceae</taxon>
        <taxon>Pelargonium</taxon>
    </lineage>
</organism>